<sequence>MSRLFLVLDTGAAVLLVALLFVVYRGRQSARGPLPPGPRGWPLVGNVFDMPSTNEWNTYMSWGEKWGDIVSVTLFGQHIVILNSVQHAYDMFEKKSNIYSDRPVITMAGEMVGWDRTLAVLRYGKRFRETRKLFSQLIGTRNHAERFSHHLEHEVHQFLRRVLREPTSLLKEVRKTTGAVILKMAYGYEVQEGDDPLVDLVDRAVEEFSISTRPGAFLVDTLPVLRHVPAWIPGAGWKKKAQVWADDLEMTCNVPYAFTQQQMSAGTAIPSFTSAHLESNPDPEQEILIKNAAASLYSAGADTTVSAVSTFFLAMTCYPEAQRKAQAEIDAVIGNDRLPTLADRDKLPYVTALCWEVLRWQPVVPLGFPHCPVKDDIHAGYLIPKGTLVSPNIWKFLHDPDTYANPFDFEPERFIASPGKTAEKDPRQIVFGFGRRICPGMYLADASLFISCAMSLAVFDISKVVRDGKVIEPVIDYTSGTISHPRPFECSIKPRSANAEVLITAMHETREK</sequence>
<evidence type="ECO:0000250" key="1">
    <source>
        <dbReference type="UniProtKB" id="P04798"/>
    </source>
</evidence>
<evidence type="ECO:0000255" key="2"/>
<evidence type="ECO:0000269" key="3">
    <source>
    </source>
</evidence>
<evidence type="ECO:0000303" key="4">
    <source>
    </source>
</evidence>
<evidence type="ECO:0000305" key="5"/>
<name>CY208_POSPM</name>
<accession>F1SYH1</accession>
<gene>
    <name evidence="4" type="primary">CYP208</name>
    <name evidence="4" type="synonym">CYP5037B5v2</name>
</gene>
<reference key="1">
    <citation type="journal article" date="2012" name="Arch. Microbiol.">
        <title>Molecular identification and functional characterization of cytochrome P450 monooxygenases from the brown-rot basidiomycete Postia placenta.</title>
        <authorList>
            <person name="Ide M."/>
            <person name="Ichinose H."/>
            <person name="Wariishi H."/>
        </authorList>
    </citation>
    <scope>NUCLEOTIDE SEQUENCE [MRNA]</scope>
    <scope>IDENTIFICATION</scope>
    <scope>FUNCTION</scope>
    <scope>CATALYTIC ACTIVITY</scope>
    <source>
        <strain>ATCC 44394 / Madison 698-R</strain>
    </source>
</reference>
<keyword id="KW-0349">Heme</keyword>
<keyword id="KW-0408">Iron</keyword>
<keyword id="KW-0472">Membrane</keyword>
<keyword id="KW-0479">Metal-binding</keyword>
<keyword id="KW-0503">Monooxygenase</keyword>
<keyword id="KW-0560">Oxidoreductase</keyword>
<keyword id="KW-0812">Transmembrane</keyword>
<keyword id="KW-1133">Transmembrane helix</keyword>
<feature type="chain" id="PRO_0000451352" description="Cytochrome P450 monooxygenase 208">
    <location>
        <begin position="1"/>
        <end position="512"/>
    </location>
</feature>
<feature type="transmembrane region" description="Helical" evidence="2">
    <location>
        <begin position="4"/>
        <end position="24"/>
    </location>
</feature>
<feature type="binding site" description="axial binding residue" evidence="1">
    <location>
        <position position="438"/>
    </location>
    <ligand>
        <name>heme</name>
        <dbReference type="ChEBI" id="CHEBI:30413"/>
    </ligand>
    <ligandPart>
        <name>Fe</name>
        <dbReference type="ChEBI" id="CHEBI:18248"/>
    </ligandPart>
</feature>
<protein>
    <recommendedName>
        <fullName evidence="4">Cytochrome P450 monooxygenase 208</fullName>
        <ecNumber evidence="3">1.-.-.-</ecNumber>
    </recommendedName>
</protein>
<comment type="function">
    <text evidence="3">Cytochrome P450 monooxygenase that is able to use 7-ethoxycoumarin as a substrate for oxidation.</text>
</comment>
<comment type="cofactor">
    <cofactor evidence="1">
        <name>heme</name>
        <dbReference type="ChEBI" id="CHEBI:30413"/>
    </cofactor>
</comment>
<comment type="pathway">
    <text evidence="5">Secondary metabolite biosynthesis.</text>
</comment>
<comment type="subcellular location">
    <subcellularLocation>
        <location evidence="2">Membrane</location>
        <topology evidence="2">Single-pass membrane protein</topology>
    </subcellularLocation>
</comment>
<comment type="similarity">
    <text evidence="5">Belongs to the cytochrome P450 family.</text>
</comment>
<proteinExistence type="evidence at protein level"/>
<organism>
    <name type="scientific">Postia placenta (strain ATCC 44394 / Madison 698-R)</name>
    <name type="common">Brown rot fungus</name>
    <name type="synonym">Poria monticola</name>
    <dbReference type="NCBI Taxonomy" id="561896"/>
    <lineage>
        <taxon>Eukaryota</taxon>
        <taxon>Fungi</taxon>
        <taxon>Dikarya</taxon>
        <taxon>Basidiomycota</taxon>
        <taxon>Agaricomycotina</taxon>
        <taxon>Agaricomycetes</taxon>
        <taxon>Polyporales</taxon>
        <taxon>Adustoporiaceae</taxon>
        <taxon>Rhodonia</taxon>
    </lineage>
</organism>
<dbReference type="EC" id="1.-.-.-" evidence="3"/>
<dbReference type="EMBL" id="AB573382">
    <property type="protein sequence ID" value="BAK09515.1"/>
    <property type="molecule type" value="mRNA"/>
</dbReference>
<dbReference type="SMR" id="F1SYH1"/>
<dbReference type="GO" id="GO:0016020">
    <property type="term" value="C:membrane"/>
    <property type="evidence" value="ECO:0007669"/>
    <property type="project" value="UniProtKB-SubCell"/>
</dbReference>
<dbReference type="GO" id="GO:0020037">
    <property type="term" value="F:heme binding"/>
    <property type="evidence" value="ECO:0007669"/>
    <property type="project" value="InterPro"/>
</dbReference>
<dbReference type="GO" id="GO:0005506">
    <property type="term" value="F:iron ion binding"/>
    <property type="evidence" value="ECO:0007669"/>
    <property type="project" value="InterPro"/>
</dbReference>
<dbReference type="GO" id="GO:0004497">
    <property type="term" value="F:monooxygenase activity"/>
    <property type="evidence" value="ECO:0007669"/>
    <property type="project" value="UniProtKB-KW"/>
</dbReference>
<dbReference type="GO" id="GO:0016705">
    <property type="term" value="F:oxidoreductase activity, acting on paired donors, with incorporation or reduction of molecular oxygen"/>
    <property type="evidence" value="ECO:0007669"/>
    <property type="project" value="InterPro"/>
</dbReference>
<dbReference type="CDD" id="cd11065">
    <property type="entry name" value="CYP64-like"/>
    <property type="match status" value="1"/>
</dbReference>
<dbReference type="Gene3D" id="1.10.630.10">
    <property type="entry name" value="Cytochrome P450"/>
    <property type="match status" value="1"/>
</dbReference>
<dbReference type="InterPro" id="IPR001128">
    <property type="entry name" value="Cyt_P450"/>
</dbReference>
<dbReference type="InterPro" id="IPR017972">
    <property type="entry name" value="Cyt_P450_CS"/>
</dbReference>
<dbReference type="InterPro" id="IPR002401">
    <property type="entry name" value="Cyt_P450_E_grp-I"/>
</dbReference>
<dbReference type="InterPro" id="IPR036396">
    <property type="entry name" value="Cyt_P450_sf"/>
</dbReference>
<dbReference type="InterPro" id="IPR050364">
    <property type="entry name" value="Cytochrome_P450_fung"/>
</dbReference>
<dbReference type="PANTHER" id="PTHR46300:SF7">
    <property type="entry name" value="P450, PUTATIVE (EUROFUNG)-RELATED"/>
    <property type="match status" value="1"/>
</dbReference>
<dbReference type="PANTHER" id="PTHR46300">
    <property type="entry name" value="P450, PUTATIVE (EUROFUNG)-RELATED-RELATED"/>
    <property type="match status" value="1"/>
</dbReference>
<dbReference type="Pfam" id="PF00067">
    <property type="entry name" value="p450"/>
    <property type="match status" value="1"/>
</dbReference>
<dbReference type="PRINTS" id="PR00463">
    <property type="entry name" value="EP450I"/>
</dbReference>
<dbReference type="PRINTS" id="PR00385">
    <property type="entry name" value="P450"/>
</dbReference>
<dbReference type="SUPFAM" id="SSF48264">
    <property type="entry name" value="Cytochrome P450"/>
    <property type="match status" value="1"/>
</dbReference>
<dbReference type="PROSITE" id="PS00086">
    <property type="entry name" value="CYTOCHROME_P450"/>
    <property type="match status" value="1"/>
</dbReference>